<accession>B7NT91</accession>
<feature type="chain" id="PRO_1000117440" description="2-C-methyl-D-erythritol 4-phosphate cytidylyltransferase">
    <location>
        <begin position="1"/>
        <end position="236"/>
    </location>
</feature>
<feature type="site" description="Transition state stabilizer" evidence="1">
    <location>
        <position position="20"/>
    </location>
</feature>
<feature type="site" description="Transition state stabilizer" evidence="1">
    <location>
        <position position="27"/>
    </location>
</feature>
<feature type="site" description="Positions MEP for the nucleophilic attack" evidence="1">
    <location>
        <position position="157"/>
    </location>
</feature>
<feature type="site" description="Positions MEP for the nucleophilic attack" evidence="1">
    <location>
        <position position="213"/>
    </location>
</feature>
<evidence type="ECO:0000255" key="1">
    <source>
        <dbReference type="HAMAP-Rule" id="MF_00108"/>
    </source>
</evidence>
<protein>
    <recommendedName>
        <fullName evidence="1">2-C-methyl-D-erythritol 4-phosphate cytidylyltransferase</fullName>
        <ecNumber evidence="1">2.7.7.60</ecNumber>
    </recommendedName>
    <alternativeName>
        <fullName evidence="1">4-diphosphocytidyl-2C-methyl-D-erythritol synthase</fullName>
    </alternativeName>
    <alternativeName>
        <fullName evidence="1">MEP cytidylyltransferase</fullName>
        <shortName evidence="1">MCT</shortName>
    </alternativeName>
</protein>
<name>ISPD_ECO7I</name>
<comment type="function">
    <text evidence="1">Catalyzes the formation of 4-diphosphocytidyl-2-C-methyl-D-erythritol from CTP and 2-C-methyl-D-erythritol 4-phosphate (MEP).</text>
</comment>
<comment type="catalytic activity">
    <reaction evidence="1">
        <text>2-C-methyl-D-erythritol 4-phosphate + CTP + H(+) = 4-CDP-2-C-methyl-D-erythritol + diphosphate</text>
        <dbReference type="Rhea" id="RHEA:13429"/>
        <dbReference type="ChEBI" id="CHEBI:15378"/>
        <dbReference type="ChEBI" id="CHEBI:33019"/>
        <dbReference type="ChEBI" id="CHEBI:37563"/>
        <dbReference type="ChEBI" id="CHEBI:57823"/>
        <dbReference type="ChEBI" id="CHEBI:58262"/>
        <dbReference type="EC" id="2.7.7.60"/>
    </reaction>
</comment>
<comment type="pathway">
    <text evidence="1">Isoprenoid biosynthesis; isopentenyl diphosphate biosynthesis via DXP pathway; isopentenyl diphosphate from 1-deoxy-D-xylulose 5-phosphate: step 2/6.</text>
</comment>
<comment type="subunit">
    <text evidence="1">Homodimer.</text>
</comment>
<comment type="similarity">
    <text evidence="1">Belongs to the IspD/TarI cytidylyltransferase family. IspD subfamily.</text>
</comment>
<organism>
    <name type="scientific">Escherichia coli O7:K1 (strain IAI39 / ExPEC)</name>
    <dbReference type="NCBI Taxonomy" id="585057"/>
    <lineage>
        <taxon>Bacteria</taxon>
        <taxon>Pseudomonadati</taxon>
        <taxon>Pseudomonadota</taxon>
        <taxon>Gammaproteobacteria</taxon>
        <taxon>Enterobacterales</taxon>
        <taxon>Enterobacteriaceae</taxon>
        <taxon>Escherichia</taxon>
    </lineage>
</organism>
<dbReference type="EC" id="2.7.7.60" evidence="1"/>
<dbReference type="EMBL" id="CU928164">
    <property type="protein sequence ID" value="CAR19055.1"/>
    <property type="molecule type" value="Genomic_DNA"/>
</dbReference>
<dbReference type="RefSeq" id="WP_000246132.1">
    <property type="nucleotide sequence ID" value="NC_011750.1"/>
</dbReference>
<dbReference type="RefSeq" id="YP_002408867.1">
    <property type="nucleotide sequence ID" value="NC_011750.1"/>
</dbReference>
<dbReference type="SMR" id="B7NT91"/>
<dbReference type="STRING" id="585057.ECIAI39_2936"/>
<dbReference type="KEGG" id="ect:ECIAI39_2936"/>
<dbReference type="PATRIC" id="fig|585057.6.peg.3045"/>
<dbReference type="HOGENOM" id="CLU_061281_3_1_6"/>
<dbReference type="UniPathway" id="UPA00056">
    <property type="reaction ID" value="UER00093"/>
</dbReference>
<dbReference type="Proteomes" id="UP000000749">
    <property type="component" value="Chromosome"/>
</dbReference>
<dbReference type="GO" id="GO:0050518">
    <property type="term" value="F:2-C-methyl-D-erythritol 4-phosphate cytidylyltransferase activity"/>
    <property type="evidence" value="ECO:0007669"/>
    <property type="project" value="UniProtKB-UniRule"/>
</dbReference>
<dbReference type="GO" id="GO:0019288">
    <property type="term" value="P:isopentenyl diphosphate biosynthetic process, methylerythritol 4-phosphate pathway"/>
    <property type="evidence" value="ECO:0007669"/>
    <property type="project" value="UniProtKB-UniRule"/>
</dbReference>
<dbReference type="CDD" id="cd02516">
    <property type="entry name" value="CDP-ME_synthetase"/>
    <property type="match status" value="1"/>
</dbReference>
<dbReference type="FunFam" id="3.90.550.10:FF:000003">
    <property type="entry name" value="2-C-methyl-D-erythritol 4-phosphate cytidylyltransferase"/>
    <property type="match status" value="1"/>
</dbReference>
<dbReference type="Gene3D" id="3.90.550.10">
    <property type="entry name" value="Spore Coat Polysaccharide Biosynthesis Protein SpsA, Chain A"/>
    <property type="match status" value="1"/>
</dbReference>
<dbReference type="HAMAP" id="MF_00108">
    <property type="entry name" value="IspD"/>
    <property type="match status" value="1"/>
</dbReference>
<dbReference type="InterPro" id="IPR001228">
    <property type="entry name" value="IspD"/>
</dbReference>
<dbReference type="InterPro" id="IPR034683">
    <property type="entry name" value="IspD/TarI"/>
</dbReference>
<dbReference type="InterPro" id="IPR050088">
    <property type="entry name" value="IspD/TarI_cytidylyltransf_bact"/>
</dbReference>
<dbReference type="InterPro" id="IPR018294">
    <property type="entry name" value="ISPD_synthase_CS"/>
</dbReference>
<dbReference type="InterPro" id="IPR029044">
    <property type="entry name" value="Nucleotide-diphossugar_trans"/>
</dbReference>
<dbReference type="NCBIfam" id="TIGR00453">
    <property type="entry name" value="ispD"/>
    <property type="match status" value="1"/>
</dbReference>
<dbReference type="PANTHER" id="PTHR32125">
    <property type="entry name" value="2-C-METHYL-D-ERYTHRITOL 4-PHOSPHATE CYTIDYLYLTRANSFERASE, CHLOROPLASTIC"/>
    <property type="match status" value="1"/>
</dbReference>
<dbReference type="PANTHER" id="PTHR32125:SF4">
    <property type="entry name" value="2-C-METHYL-D-ERYTHRITOL 4-PHOSPHATE CYTIDYLYLTRANSFERASE, CHLOROPLASTIC"/>
    <property type="match status" value="1"/>
</dbReference>
<dbReference type="Pfam" id="PF01128">
    <property type="entry name" value="IspD"/>
    <property type="match status" value="1"/>
</dbReference>
<dbReference type="SUPFAM" id="SSF53448">
    <property type="entry name" value="Nucleotide-diphospho-sugar transferases"/>
    <property type="match status" value="1"/>
</dbReference>
<dbReference type="PROSITE" id="PS01295">
    <property type="entry name" value="ISPD"/>
    <property type="match status" value="1"/>
</dbReference>
<keyword id="KW-0414">Isoprene biosynthesis</keyword>
<keyword id="KW-0548">Nucleotidyltransferase</keyword>
<keyword id="KW-0808">Transferase</keyword>
<gene>
    <name evidence="1" type="primary">ispD</name>
    <name type="ordered locus">ECIAI39_2936</name>
</gene>
<proteinExistence type="inferred from homology"/>
<reference key="1">
    <citation type="journal article" date="2009" name="PLoS Genet.">
        <title>Organised genome dynamics in the Escherichia coli species results in highly diverse adaptive paths.</title>
        <authorList>
            <person name="Touchon M."/>
            <person name="Hoede C."/>
            <person name="Tenaillon O."/>
            <person name="Barbe V."/>
            <person name="Baeriswyl S."/>
            <person name="Bidet P."/>
            <person name="Bingen E."/>
            <person name="Bonacorsi S."/>
            <person name="Bouchier C."/>
            <person name="Bouvet O."/>
            <person name="Calteau A."/>
            <person name="Chiapello H."/>
            <person name="Clermont O."/>
            <person name="Cruveiller S."/>
            <person name="Danchin A."/>
            <person name="Diard M."/>
            <person name="Dossat C."/>
            <person name="Karoui M.E."/>
            <person name="Frapy E."/>
            <person name="Garry L."/>
            <person name="Ghigo J.M."/>
            <person name="Gilles A.M."/>
            <person name="Johnson J."/>
            <person name="Le Bouguenec C."/>
            <person name="Lescat M."/>
            <person name="Mangenot S."/>
            <person name="Martinez-Jehanne V."/>
            <person name="Matic I."/>
            <person name="Nassif X."/>
            <person name="Oztas S."/>
            <person name="Petit M.A."/>
            <person name="Pichon C."/>
            <person name="Rouy Z."/>
            <person name="Ruf C.S."/>
            <person name="Schneider D."/>
            <person name="Tourret J."/>
            <person name="Vacherie B."/>
            <person name="Vallenet D."/>
            <person name="Medigue C."/>
            <person name="Rocha E.P.C."/>
            <person name="Denamur E."/>
        </authorList>
    </citation>
    <scope>NUCLEOTIDE SEQUENCE [LARGE SCALE GENOMIC DNA]</scope>
    <source>
        <strain>IAI39 / ExPEC</strain>
    </source>
</reference>
<sequence>MATTHLDVCAVVPAAGFGRRMQTECPKQYLSIGNQTILEHSVHALLAHPRVKHVVIAISPGDSRFAQLPLANHPQITVVDGGEERADSVLAGLKAAGDAQWVLVHDAARPCLHQDDLARLLALSETSRTGGILAAPVRDTMKRAEPGKNAIAHTVDRNGLWHALTPQFFPRELLHDCLTRALNEGATITDEASALEYCGFHPQLVEGRADNIKVTRPEDLALAEFYLTRTIHQENT</sequence>